<organism>
    <name type="scientific">Homo sapiens</name>
    <name type="common">Human</name>
    <dbReference type="NCBI Taxonomy" id="9606"/>
    <lineage>
        <taxon>Eukaryota</taxon>
        <taxon>Metazoa</taxon>
        <taxon>Chordata</taxon>
        <taxon>Craniata</taxon>
        <taxon>Vertebrata</taxon>
        <taxon>Euteleostomi</taxon>
        <taxon>Mammalia</taxon>
        <taxon>Eutheria</taxon>
        <taxon>Euarchontoglires</taxon>
        <taxon>Primates</taxon>
        <taxon>Haplorrhini</taxon>
        <taxon>Catarrhini</taxon>
        <taxon>Hominidae</taxon>
        <taxon>Homo</taxon>
    </lineage>
</organism>
<keyword id="KW-0489">Methyltransferase</keyword>
<keyword id="KW-0496">Mitochondrion</keyword>
<keyword id="KW-1267">Proteomics identification</keyword>
<keyword id="KW-1185">Reference proteome</keyword>
<keyword id="KW-0949">S-adenosyl-L-methionine</keyword>
<keyword id="KW-0808">Transferase</keyword>
<keyword id="KW-0809">Transit peptide</keyword>
<gene>
    <name evidence="4 6" type="primary">CSKMT</name>
    <name evidence="6" type="synonym">METTL12</name>
</gene>
<comment type="function">
    <text evidence="2 3">Protein-lysine methyltransferase that selectively trimethylates citrate synthase (CS) in mitochondria (PubMed:28391595, PubMed:28887308). Seems to conduct trimethylation in a highly distributive manner rather than in a processive manner, and thus introduces a single methyl group per binding event (PubMed:28887308).</text>
</comment>
<comment type="catalytic activity">
    <reaction evidence="3">
        <text>L-lysyl-[citrate synthase] + S-adenosyl-L-methionine = N(6)-methyl-L-lysyl-[citrate synthase] + S-adenosyl-L-homocysteine + H(+)</text>
        <dbReference type="Rhea" id="RHEA:55544"/>
        <dbReference type="Rhea" id="RHEA-COMP:14212"/>
        <dbReference type="Rhea" id="RHEA-COMP:14213"/>
        <dbReference type="ChEBI" id="CHEBI:15378"/>
        <dbReference type="ChEBI" id="CHEBI:29969"/>
        <dbReference type="ChEBI" id="CHEBI:57856"/>
        <dbReference type="ChEBI" id="CHEBI:59789"/>
        <dbReference type="ChEBI" id="CHEBI:61929"/>
    </reaction>
</comment>
<comment type="catalytic activity">
    <reaction evidence="3">
        <text>N(6)-methyl-L-lysyl-[citrate synthase] + S-adenosyl-L-methionine = N(6),N(6)-dimethyl-L-lysyl-[citrate synthase] + S-adenosyl-L-homocysteine + H(+)</text>
        <dbReference type="Rhea" id="RHEA:55548"/>
        <dbReference type="Rhea" id="RHEA-COMP:14213"/>
        <dbReference type="Rhea" id="RHEA-COMP:14214"/>
        <dbReference type="ChEBI" id="CHEBI:15378"/>
        <dbReference type="ChEBI" id="CHEBI:57856"/>
        <dbReference type="ChEBI" id="CHEBI:59789"/>
        <dbReference type="ChEBI" id="CHEBI:61929"/>
        <dbReference type="ChEBI" id="CHEBI:61976"/>
    </reaction>
</comment>
<comment type="catalytic activity">
    <reaction evidence="3">
        <text>N(6),N(6)-dimethyl-L-lysyl-[citrate synthase] + S-adenosyl-L-methionine = N(6),N(6),N(6)-trimethyl-L-lysyl-[citrate synthase] + S-adenosyl-L-homocysteine + H(+)</text>
        <dbReference type="Rhea" id="RHEA:55552"/>
        <dbReference type="Rhea" id="RHEA-COMP:14214"/>
        <dbReference type="Rhea" id="RHEA-COMP:14215"/>
        <dbReference type="ChEBI" id="CHEBI:15378"/>
        <dbReference type="ChEBI" id="CHEBI:57856"/>
        <dbReference type="ChEBI" id="CHEBI:59789"/>
        <dbReference type="ChEBI" id="CHEBI:61961"/>
        <dbReference type="ChEBI" id="CHEBI:61976"/>
    </reaction>
</comment>
<comment type="activity regulation">
    <text evidence="3">Citrate synthase-lysine methyltransferase activity is inhibited by S-adenosylhomocysteine (AdoHcy) and oxaloacetate (OAA) (PubMed:28887308).</text>
</comment>
<comment type="interaction">
    <interactant intactId="EBI-12842046">
        <id>A8MUP2</id>
    </interactant>
    <interactant intactId="EBI-953896">
        <id>Q9NP55</id>
        <label>BPIFA1</label>
    </interactant>
    <organismsDiffer>false</organismsDiffer>
    <experiments>3</experiments>
</comment>
<comment type="interaction">
    <interactant intactId="EBI-12842046">
        <id>A8MUP2</id>
    </interactant>
    <interactant intactId="EBI-1052037">
        <id>Q8IUC1</id>
        <label>KRTAP11-1</label>
    </interactant>
    <organismsDiffer>false</organismsDiffer>
    <experiments>3</experiments>
</comment>
<comment type="interaction">
    <interactant intactId="EBI-12842046">
        <id>A8MUP2</id>
    </interactant>
    <interactant intactId="EBI-11953846">
        <id>Q52LG2</id>
        <label>KRTAP13-2</label>
    </interactant>
    <organismsDiffer>false</organismsDiffer>
    <experiments>3</experiments>
</comment>
<comment type="interaction">
    <interactant intactId="EBI-12842046">
        <id>A8MUP2</id>
    </interactant>
    <interactant intactId="EBI-12805508">
        <id>Q3LI70</id>
        <label>KRTAP19-6</label>
    </interactant>
    <organismsDiffer>false</organismsDiffer>
    <experiments>3</experiments>
</comment>
<comment type="interaction">
    <interactant intactId="EBI-12842046">
        <id>A8MUP2</id>
    </interactant>
    <interactant intactId="EBI-749295">
        <id>O75716</id>
        <label>STK16</label>
    </interactant>
    <organismsDiffer>false</organismsDiffer>
    <experiments>3</experiments>
</comment>
<comment type="interaction">
    <interactant intactId="EBI-12842046">
        <id>A8MUP2</id>
    </interactant>
    <interactant intactId="EBI-10239812">
        <id>Q96M29</id>
        <label>TEKT5</label>
    </interactant>
    <organismsDiffer>false</organismsDiffer>
    <experiments>3</experiments>
</comment>
<comment type="subcellular location">
    <subcellularLocation>
        <location evidence="1 3">Mitochondrion</location>
    </subcellularLocation>
</comment>
<comment type="similarity">
    <text evidence="5">Belongs to the methyltransferase superfamily.</text>
</comment>
<feature type="transit peptide" description="Mitochondrion" evidence="3">
    <location>
        <begin position="1"/>
        <end position="28"/>
    </location>
</feature>
<feature type="chain" id="PRO_0000349199" description="Citrate synthase-lysine N-methyltransferase CSKMT, mitochondrial">
    <location>
        <begin position="29"/>
        <end position="240"/>
    </location>
</feature>
<feature type="sequence variant" id="VAR_046283" description="In dbSNP:rs11231181.">
    <original>G</original>
    <variation>S</variation>
    <location>
        <position position="125"/>
    </location>
</feature>
<feature type="mutagenesis site" description="Inhibits citrate synthase-lysine methyltransferase activity." evidence="3">
    <original>D</original>
    <variation>A</variation>
    <location>
        <position position="107"/>
    </location>
</feature>
<protein>
    <recommendedName>
        <fullName evidence="4 5">Citrate synthase-lysine N-methyltransferase CSKMT, mitochondrial</fullName>
        <shortName evidence="4">CS-KMT</shortName>
        <ecNumber evidence="3">2.1.1.-</ecNumber>
    </recommendedName>
    <alternativeName>
        <fullName evidence="6">Methyltransferase-like protein 12, mitochondrial</fullName>
    </alternativeName>
</protein>
<proteinExistence type="evidence at protein level"/>
<sequence length="240" mass="25910">MAALRRMLHLPSLMMGTCRPFAGSLADSCLADRCLWDRLHAQPRLGTVPTFDWFFGYDEVQGLLLPLLQEAQAASPLRVLDVGCGTSSLCTGLYTKSPHPVDVLGVDFSPVAVAHMNSLLEGGPGQTPLCPGHPASSLHFMHADAQNLGAVASSGSFQLLLDKGTWDAVARGGLPRAYQLLSECLRVLNPQGTLIQFSDEDPDVRLPCLEQGSYGWTVTVQELGPFRGITYFAYLIQGSH</sequence>
<accession>A8MUP2</accession>
<accession>B7Z4C1</accession>
<dbReference type="EC" id="2.1.1.-" evidence="3"/>
<dbReference type="EMBL" id="AK297138">
    <property type="protein sequence ID" value="BAH12507.1"/>
    <property type="molecule type" value="mRNA"/>
</dbReference>
<dbReference type="EMBL" id="AP001458">
    <property type="status" value="NOT_ANNOTATED_CDS"/>
    <property type="molecule type" value="Genomic_DNA"/>
</dbReference>
<dbReference type="EMBL" id="BC147001">
    <property type="protein sequence ID" value="AAI47002.1"/>
    <property type="molecule type" value="mRNA"/>
</dbReference>
<dbReference type="EMBL" id="BC147011">
    <property type="protein sequence ID" value="AAI47012.1"/>
    <property type="molecule type" value="mRNA"/>
</dbReference>
<dbReference type="CCDS" id="CCDS41657.1"/>
<dbReference type="RefSeq" id="NP_001036694.1">
    <property type="nucleotide sequence ID" value="NM_001043229.2"/>
</dbReference>
<dbReference type="SMR" id="A8MUP2"/>
<dbReference type="BioGRID" id="593305">
    <property type="interactions" value="7"/>
</dbReference>
<dbReference type="FunCoup" id="A8MUP2">
    <property type="interactions" value="8"/>
</dbReference>
<dbReference type="IntAct" id="A8MUP2">
    <property type="interactions" value="6"/>
</dbReference>
<dbReference type="STRING" id="9606.ENSP00000431287"/>
<dbReference type="BioMuta" id="METTL12"/>
<dbReference type="jPOST" id="A8MUP2"/>
<dbReference type="MassIVE" id="A8MUP2"/>
<dbReference type="PaxDb" id="9606-ENSP00000431287"/>
<dbReference type="PeptideAtlas" id="A8MUP2"/>
<dbReference type="ProteomicsDB" id="2121"/>
<dbReference type="Antibodypedia" id="50269">
    <property type="antibodies" value="10 antibodies from 5 providers"/>
</dbReference>
<dbReference type="DNASU" id="751071"/>
<dbReference type="Ensembl" id="ENST00000532971.2">
    <property type="protein sequence ID" value="ENSP00000431287.1"/>
    <property type="gene ID" value="ENSG00000214756.8"/>
</dbReference>
<dbReference type="GeneID" id="751071"/>
<dbReference type="KEGG" id="hsa:751071"/>
<dbReference type="MANE-Select" id="ENST00000532971.2">
    <property type="protein sequence ID" value="ENSP00000431287.1"/>
    <property type="RefSeq nucleotide sequence ID" value="NM_001043229.2"/>
    <property type="RefSeq protein sequence ID" value="NP_001036694.1"/>
</dbReference>
<dbReference type="UCSC" id="uc001nug.2">
    <property type="organism name" value="human"/>
</dbReference>
<dbReference type="AGR" id="HGNC:33113"/>
<dbReference type="CTD" id="751071"/>
<dbReference type="GeneCards" id="CSKMT"/>
<dbReference type="HGNC" id="HGNC:33113">
    <property type="gene designation" value="CSKMT"/>
</dbReference>
<dbReference type="HPA" id="ENSG00000214756">
    <property type="expression patterns" value="Not detected"/>
</dbReference>
<dbReference type="MIM" id="617897">
    <property type="type" value="gene"/>
</dbReference>
<dbReference type="neXtProt" id="NX_A8MUP2"/>
<dbReference type="OpenTargets" id="ENSG00000214756"/>
<dbReference type="PharmGKB" id="PA164722245"/>
<dbReference type="VEuPathDB" id="HostDB:ENSG00000214756"/>
<dbReference type="eggNOG" id="KOG2352">
    <property type="taxonomic scope" value="Eukaryota"/>
</dbReference>
<dbReference type="GeneTree" id="ENSGT00510000049875"/>
<dbReference type="HOGENOM" id="CLU_098158_0_0_1"/>
<dbReference type="InParanoid" id="A8MUP2"/>
<dbReference type="OMA" id="LMQEHIQ"/>
<dbReference type="OrthoDB" id="411785at2759"/>
<dbReference type="PAN-GO" id="A8MUP2">
    <property type="GO annotations" value="0 GO annotations based on evolutionary models"/>
</dbReference>
<dbReference type="PhylomeDB" id="A8MUP2"/>
<dbReference type="TreeFam" id="TF354334"/>
<dbReference type="PathwayCommons" id="A8MUP2"/>
<dbReference type="Reactome" id="R-HSA-9854311">
    <property type="pathway name" value="Maturation of TCA enzymes and regulation of TCA cycle"/>
</dbReference>
<dbReference type="SignaLink" id="A8MUP2"/>
<dbReference type="SIGNOR" id="A8MUP2"/>
<dbReference type="BioGRID-ORCS" id="751071">
    <property type="hits" value="11 hits in 1148 CRISPR screens"/>
</dbReference>
<dbReference type="ChiTaRS" id="METTL12">
    <property type="organism name" value="human"/>
</dbReference>
<dbReference type="GenomeRNAi" id="751071"/>
<dbReference type="Pharos" id="A8MUP2">
    <property type="development level" value="Tdark"/>
</dbReference>
<dbReference type="PRO" id="PR:A8MUP2"/>
<dbReference type="Proteomes" id="UP000005640">
    <property type="component" value="Chromosome 11"/>
</dbReference>
<dbReference type="RNAct" id="A8MUP2">
    <property type="molecule type" value="protein"/>
</dbReference>
<dbReference type="Bgee" id="ENSG00000214756">
    <property type="expression patterns" value="Expressed in colonic epithelium and 99 other cell types or tissues"/>
</dbReference>
<dbReference type="GO" id="GO:0005759">
    <property type="term" value="C:mitochondrial matrix"/>
    <property type="evidence" value="ECO:0000304"/>
    <property type="project" value="Reactome"/>
</dbReference>
<dbReference type="GO" id="GO:0005739">
    <property type="term" value="C:mitochondrion"/>
    <property type="evidence" value="ECO:0006056"/>
    <property type="project" value="FlyBase"/>
</dbReference>
<dbReference type="GO" id="GO:0016278">
    <property type="term" value="F:lysine N-methyltransferase activity"/>
    <property type="evidence" value="ECO:0000314"/>
    <property type="project" value="UniProtKB"/>
</dbReference>
<dbReference type="GO" id="GO:0016279">
    <property type="term" value="F:protein-lysine N-methyltransferase activity"/>
    <property type="evidence" value="ECO:0000314"/>
    <property type="project" value="UniProtKB"/>
</dbReference>
<dbReference type="GO" id="GO:0018027">
    <property type="term" value="P:peptidyl-lysine dimethylation"/>
    <property type="evidence" value="ECO:0000314"/>
    <property type="project" value="UniProtKB"/>
</dbReference>
<dbReference type="GO" id="GO:0018026">
    <property type="term" value="P:peptidyl-lysine monomethylation"/>
    <property type="evidence" value="ECO:0000314"/>
    <property type="project" value="UniProtKB"/>
</dbReference>
<dbReference type="GO" id="GO:0018023">
    <property type="term" value="P:peptidyl-lysine trimethylation"/>
    <property type="evidence" value="ECO:0000314"/>
    <property type="project" value="UniProtKB"/>
</dbReference>
<dbReference type="GO" id="GO:0006479">
    <property type="term" value="P:protein methylation"/>
    <property type="evidence" value="ECO:0000314"/>
    <property type="project" value="UniProtKB"/>
</dbReference>
<dbReference type="GO" id="GO:0006099">
    <property type="term" value="P:tricarboxylic acid cycle"/>
    <property type="evidence" value="ECO:0000304"/>
    <property type="project" value="Reactome"/>
</dbReference>
<dbReference type="CDD" id="cd02440">
    <property type="entry name" value="AdoMet_MTases"/>
    <property type="match status" value="1"/>
</dbReference>
<dbReference type="FunFam" id="3.40.50.150:FF:000200">
    <property type="entry name" value="Citrate synthase lysine methyltransferase"/>
    <property type="match status" value="1"/>
</dbReference>
<dbReference type="Gene3D" id="3.40.50.150">
    <property type="entry name" value="Vaccinia Virus protein VP39"/>
    <property type="match status" value="1"/>
</dbReference>
<dbReference type="InterPro" id="IPR051419">
    <property type="entry name" value="Lys/N-term_MeTrsfase_sf"/>
</dbReference>
<dbReference type="InterPro" id="IPR025714">
    <property type="entry name" value="Methyltranfer_dom"/>
</dbReference>
<dbReference type="InterPro" id="IPR029063">
    <property type="entry name" value="SAM-dependent_MTases_sf"/>
</dbReference>
<dbReference type="PANTHER" id="PTHR12176:SF83">
    <property type="entry name" value="CITRATE SYNTHASE-LYSINE N-METHYLTRANSFERASE CSKMT, MITOCHONDRIAL"/>
    <property type="match status" value="1"/>
</dbReference>
<dbReference type="PANTHER" id="PTHR12176">
    <property type="entry name" value="SAM-DEPENDENT METHYLTRANSFERASE SUPERFAMILY PROTEIN"/>
    <property type="match status" value="1"/>
</dbReference>
<dbReference type="Pfam" id="PF13847">
    <property type="entry name" value="Methyltransf_31"/>
    <property type="match status" value="1"/>
</dbReference>
<dbReference type="SUPFAM" id="SSF53335">
    <property type="entry name" value="S-adenosyl-L-methionine-dependent methyltransferases"/>
    <property type="match status" value="1"/>
</dbReference>
<evidence type="ECO:0000269" key="1">
    <source>
    </source>
</evidence>
<evidence type="ECO:0000269" key="2">
    <source>
    </source>
</evidence>
<evidence type="ECO:0000269" key="3">
    <source>
    </source>
</evidence>
<evidence type="ECO:0000303" key="4">
    <source>
    </source>
</evidence>
<evidence type="ECO:0000305" key="5"/>
<evidence type="ECO:0000312" key="6">
    <source>
        <dbReference type="HGNC" id="HGNC:33113"/>
    </source>
</evidence>
<reference key="1">
    <citation type="journal article" date="2004" name="Nat. Genet.">
        <title>Complete sequencing and characterization of 21,243 full-length human cDNAs.</title>
        <authorList>
            <person name="Ota T."/>
            <person name="Suzuki Y."/>
            <person name="Nishikawa T."/>
            <person name="Otsuki T."/>
            <person name="Sugiyama T."/>
            <person name="Irie R."/>
            <person name="Wakamatsu A."/>
            <person name="Hayashi K."/>
            <person name="Sato H."/>
            <person name="Nagai K."/>
            <person name="Kimura K."/>
            <person name="Makita H."/>
            <person name="Sekine M."/>
            <person name="Obayashi M."/>
            <person name="Nishi T."/>
            <person name="Shibahara T."/>
            <person name="Tanaka T."/>
            <person name="Ishii S."/>
            <person name="Yamamoto J."/>
            <person name="Saito K."/>
            <person name="Kawai Y."/>
            <person name="Isono Y."/>
            <person name="Nakamura Y."/>
            <person name="Nagahari K."/>
            <person name="Murakami K."/>
            <person name="Yasuda T."/>
            <person name="Iwayanagi T."/>
            <person name="Wagatsuma M."/>
            <person name="Shiratori A."/>
            <person name="Sudo H."/>
            <person name="Hosoiri T."/>
            <person name="Kaku Y."/>
            <person name="Kodaira H."/>
            <person name="Kondo H."/>
            <person name="Sugawara M."/>
            <person name="Takahashi M."/>
            <person name="Kanda K."/>
            <person name="Yokoi T."/>
            <person name="Furuya T."/>
            <person name="Kikkawa E."/>
            <person name="Omura Y."/>
            <person name="Abe K."/>
            <person name="Kamihara K."/>
            <person name="Katsuta N."/>
            <person name="Sato K."/>
            <person name="Tanikawa M."/>
            <person name="Yamazaki M."/>
            <person name="Ninomiya K."/>
            <person name="Ishibashi T."/>
            <person name="Yamashita H."/>
            <person name="Murakawa K."/>
            <person name="Fujimori K."/>
            <person name="Tanai H."/>
            <person name="Kimata M."/>
            <person name="Watanabe M."/>
            <person name="Hiraoka S."/>
            <person name="Chiba Y."/>
            <person name="Ishida S."/>
            <person name="Ono Y."/>
            <person name="Takiguchi S."/>
            <person name="Watanabe S."/>
            <person name="Yosida M."/>
            <person name="Hotuta T."/>
            <person name="Kusano J."/>
            <person name="Kanehori K."/>
            <person name="Takahashi-Fujii A."/>
            <person name="Hara H."/>
            <person name="Tanase T.-O."/>
            <person name="Nomura Y."/>
            <person name="Togiya S."/>
            <person name="Komai F."/>
            <person name="Hara R."/>
            <person name="Takeuchi K."/>
            <person name="Arita M."/>
            <person name="Imose N."/>
            <person name="Musashino K."/>
            <person name="Yuuki H."/>
            <person name="Oshima A."/>
            <person name="Sasaki N."/>
            <person name="Aotsuka S."/>
            <person name="Yoshikawa Y."/>
            <person name="Matsunawa H."/>
            <person name="Ichihara T."/>
            <person name="Shiohata N."/>
            <person name="Sano S."/>
            <person name="Moriya S."/>
            <person name="Momiyama H."/>
            <person name="Satoh N."/>
            <person name="Takami S."/>
            <person name="Terashima Y."/>
            <person name="Suzuki O."/>
            <person name="Nakagawa S."/>
            <person name="Senoh A."/>
            <person name="Mizoguchi H."/>
            <person name="Goto Y."/>
            <person name="Shimizu F."/>
            <person name="Wakebe H."/>
            <person name="Hishigaki H."/>
            <person name="Watanabe T."/>
            <person name="Sugiyama A."/>
            <person name="Takemoto M."/>
            <person name="Kawakami B."/>
            <person name="Yamazaki M."/>
            <person name="Watanabe K."/>
            <person name="Kumagai A."/>
            <person name="Itakura S."/>
            <person name="Fukuzumi Y."/>
            <person name="Fujimori Y."/>
            <person name="Komiyama M."/>
            <person name="Tashiro H."/>
            <person name="Tanigami A."/>
            <person name="Fujiwara T."/>
            <person name="Ono T."/>
            <person name="Yamada K."/>
            <person name="Fujii Y."/>
            <person name="Ozaki K."/>
            <person name="Hirao M."/>
            <person name="Ohmori Y."/>
            <person name="Kawabata A."/>
            <person name="Hikiji T."/>
            <person name="Kobatake N."/>
            <person name="Inagaki H."/>
            <person name="Ikema Y."/>
            <person name="Okamoto S."/>
            <person name="Okitani R."/>
            <person name="Kawakami T."/>
            <person name="Noguchi S."/>
            <person name="Itoh T."/>
            <person name="Shigeta K."/>
            <person name="Senba T."/>
            <person name="Matsumura K."/>
            <person name="Nakajima Y."/>
            <person name="Mizuno T."/>
            <person name="Morinaga M."/>
            <person name="Sasaki M."/>
            <person name="Togashi T."/>
            <person name="Oyama M."/>
            <person name="Hata H."/>
            <person name="Watanabe M."/>
            <person name="Komatsu T."/>
            <person name="Mizushima-Sugano J."/>
            <person name="Satoh T."/>
            <person name="Shirai Y."/>
            <person name="Takahashi Y."/>
            <person name="Nakagawa K."/>
            <person name="Okumura K."/>
            <person name="Nagase T."/>
            <person name="Nomura N."/>
            <person name="Kikuchi H."/>
            <person name="Masuho Y."/>
            <person name="Yamashita R."/>
            <person name="Nakai K."/>
            <person name="Yada T."/>
            <person name="Nakamura Y."/>
            <person name="Ohara O."/>
            <person name="Isogai T."/>
            <person name="Sugano S."/>
        </authorList>
    </citation>
    <scope>NUCLEOTIDE SEQUENCE [LARGE SCALE MRNA]</scope>
</reference>
<reference key="2">
    <citation type="journal article" date="2006" name="Nature">
        <title>Human chromosome 11 DNA sequence and analysis including novel gene identification.</title>
        <authorList>
            <person name="Taylor T.D."/>
            <person name="Noguchi H."/>
            <person name="Totoki Y."/>
            <person name="Toyoda A."/>
            <person name="Kuroki Y."/>
            <person name="Dewar K."/>
            <person name="Lloyd C."/>
            <person name="Itoh T."/>
            <person name="Takeda T."/>
            <person name="Kim D.-W."/>
            <person name="She X."/>
            <person name="Barlow K.F."/>
            <person name="Bloom T."/>
            <person name="Bruford E."/>
            <person name="Chang J.L."/>
            <person name="Cuomo C.A."/>
            <person name="Eichler E."/>
            <person name="FitzGerald M.G."/>
            <person name="Jaffe D.B."/>
            <person name="LaButti K."/>
            <person name="Nicol R."/>
            <person name="Park H.-S."/>
            <person name="Seaman C."/>
            <person name="Sougnez C."/>
            <person name="Yang X."/>
            <person name="Zimmer A.R."/>
            <person name="Zody M.C."/>
            <person name="Birren B.W."/>
            <person name="Nusbaum C."/>
            <person name="Fujiyama A."/>
            <person name="Hattori M."/>
            <person name="Rogers J."/>
            <person name="Lander E.S."/>
            <person name="Sakaki Y."/>
        </authorList>
    </citation>
    <scope>NUCLEOTIDE SEQUENCE [LARGE SCALE GENOMIC DNA]</scope>
</reference>
<reference key="3">
    <citation type="journal article" date="2004" name="Genome Res.">
        <title>The status, quality, and expansion of the NIH full-length cDNA project: the Mammalian Gene Collection (MGC).</title>
        <authorList>
            <consortium name="The MGC Project Team"/>
        </authorList>
    </citation>
    <scope>NUCLEOTIDE SEQUENCE [LARGE SCALE MRNA]</scope>
    <source>
        <tissue>Brain</tissue>
    </source>
</reference>
<reference key="4">
    <citation type="journal article" date="2014" name="J. Biol. Chem.">
        <title>Human METTL20 methylates lysine residues adjacent to the recognition loop of the electron transfer flavoprotein in mitochondria.</title>
        <authorList>
            <person name="Rhein V.F."/>
            <person name="Carroll J."/>
            <person name="He J."/>
            <person name="Ding S."/>
            <person name="Fearnley I.M."/>
            <person name="Walker J.E."/>
        </authorList>
    </citation>
    <scope>SUBCELLULAR LOCATION</scope>
</reference>
<reference key="5">
    <citation type="journal article" date="2017" name="FEBS Lett.">
        <title>Human METTL12 is a mitochondrial methyltransferase that modifies citrate synthase.</title>
        <authorList>
            <person name="Rhein V.F."/>
            <person name="Carroll J."/>
            <person name="Ding S."/>
            <person name="Fearnley I.M."/>
            <person name="Walker J.E."/>
        </authorList>
    </citation>
    <scope>FUNCTION</scope>
</reference>
<reference key="6">
    <citation type="journal article" date="2017" name="J. Biol. Chem.">
        <title>Uncovering human METTL12 as a mitochondrial methyltransferase that modulates citrate synthase activity through metabolite-sensitive lysine methylation.</title>
        <authorList>
            <person name="Malecki J."/>
            <person name="Jakobsson M.E."/>
            <person name="Ho A.Y.Y."/>
            <person name="Moen A."/>
            <person name="Rustan A.C."/>
            <person name="Falnes P.O."/>
        </authorList>
    </citation>
    <scope>FUNCTION</scope>
    <scope>CATALYTIC ACTIVITY</scope>
    <scope>TRANSIT PEPTIDE CLEAVAGE SITE</scope>
    <scope>SUBCELLULAR LOCATION</scope>
    <scope>MUTAGENESIS OF ASP-107</scope>
</reference>
<name>CSKMT_HUMAN</name>